<keyword id="KW-0028">Amino-acid biosynthesis</keyword>
<keyword id="KW-0055">Arginine biosynthesis</keyword>
<keyword id="KW-0963">Cytoplasm</keyword>
<keyword id="KW-0456">Lyase</keyword>
<dbReference type="EC" id="4.3.2.1" evidence="1"/>
<dbReference type="EMBL" id="CP001215">
    <property type="protein sequence ID" value="ACP16168.1"/>
    <property type="molecule type" value="Genomic_DNA"/>
</dbReference>
<dbReference type="RefSeq" id="WP_000041275.1">
    <property type="nucleotide sequence ID" value="NC_012581.1"/>
</dbReference>
<dbReference type="SMR" id="C3L913"/>
<dbReference type="GeneID" id="45024502"/>
<dbReference type="KEGG" id="bah:BAMEG_4911"/>
<dbReference type="HOGENOM" id="CLU_027272_2_3_9"/>
<dbReference type="UniPathway" id="UPA00068">
    <property type="reaction ID" value="UER00114"/>
</dbReference>
<dbReference type="GO" id="GO:0005829">
    <property type="term" value="C:cytosol"/>
    <property type="evidence" value="ECO:0007669"/>
    <property type="project" value="TreeGrafter"/>
</dbReference>
<dbReference type="GO" id="GO:0004056">
    <property type="term" value="F:argininosuccinate lyase activity"/>
    <property type="evidence" value="ECO:0007669"/>
    <property type="project" value="UniProtKB-UniRule"/>
</dbReference>
<dbReference type="GO" id="GO:0042450">
    <property type="term" value="P:arginine biosynthetic process via ornithine"/>
    <property type="evidence" value="ECO:0007669"/>
    <property type="project" value="InterPro"/>
</dbReference>
<dbReference type="GO" id="GO:0006526">
    <property type="term" value="P:L-arginine biosynthetic process"/>
    <property type="evidence" value="ECO:0007669"/>
    <property type="project" value="UniProtKB-UniRule"/>
</dbReference>
<dbReference type="CDD" id="cd01359">
    <property type="entry name" value="Argininosuccinate_lyase"/>
    <property type="match status" value="1"/>
</dbReference>
<dbReference type="FunFam" id="1.10.275.10:FF:000002">
    <property type="entry name" value="Argininosuccinate lyase"/>
    <property type="match status" value="1"/>
</dbReference>
<dbReference type="FunFam" id="1.10.40.30:FF:000001">
    <property type="entry name" value="Argininosuccinate lyase"/>
    <property type="match status" value="1"/>
</dbReference>
<dbReference type="FunFam" id="1.20.200.10:FF:000006">
    <property type="entry name" value="Argininosuccinate lyase"/>
    <property type="match status" value="1"/>
</dbReference>
<dbReference type="Gene3D" id="1.10.40.30">
    <property type="entry name" value="Fumarase/aspartase (C-terminal domain)"/>
    <property type="match status" value="1"/>
</dbReference>
<dbReference type="Gene3D" id="1.20.200.10">
    <property type="entry name" value="Fumarase/aspartase (Central domain)"/>
    <property type="match status" value="1"/>
</dbReference>
<dbReference type="Gene3D" id="1.10.275.10">
    <property type="entry name" value="Fumarase/aspartase (N-terminal domain)"/>
    <property type="match status" value="1"/>
</dbReference>
<dbReference type="HAMAP" id="MF_00006">
    <property type="entry name" value="Arg_succ_lyase"/>
    <property type="match status" value="1"/>
</dbReference>
<dbReference type="InterPro" id="IPR029419">
    <property type="entry name" value="Arg_succ_lyase_C"/>
</dbReference>
<dbReference type="InterPro" id="IPR009049">
    <property type="entry name" value="Argininosuccinate_lyase"/>
</dbReference>
<dbReference type="InterPro" id="IPR024083">
    <property type="entry name" value="Fumarase/histidase_N"/>
</dbReference>
<dbReference type="InterPro" id="IPR020557">
    <property type="entry name" value="Fumarate_lyase_CS"/>
</dbReference>
<dbReference type="InterPro" id="IPR000362">
    <property type="entry name" value="Fumarate_lyase_fam"/>
</dbReference>
<dbReference type="InterPro" id="IPR022761">
    <property type="entry name" value="Fumarate_lyase_N"/>
</dbReference>
<dbReference type="InterPro" id="IPR008948">
    <property type="entry name" value="L-Aspartase-like"/>
</dbReference>
<dbReference type="NCBIfam" id="TIGR00838">
    <property type="entry name" value="argH"/>
    <property type="match status" value="1"/>
</dbReference>
<dbReference type="PANTHER" id="PTHR43814">
    <property type="entry name" value="ARGININOSUCCINATE LYASE"/>
    <property type="match status" value="1"/>
</dbReference>
<dbReference type="PANTHER" id="PTHR43814:SF1">
    <property type="entry name" value="ARGININOSUCCINATE LYASE"/>
    <property type="match status" value="1"/>
</dbReference>
<dbReference type="Pfam" id="PF14698">
    <property type="entry name" value="ASL_C2"/>
    <property type="match status" value="1"/>
</dbReference>
<dbReference type="Pfam" id="PF00206">
    <property type="entry name" value="Lyase_1"/>
    <property type="match status" value="1"/>
</dbReference>
<dbReference type="PRINTS" id="PR00145">
    <property type="entry name" value="ARGSUCLYASE"/>
</dbReference>
<dbReference type="PRINTS" id="PR00149">
    <property type="entry name" value="FUMRATELYASE"/>
</dbReference>
<dbReference type="SUPFAM" id="SSF48557">
    <property type="entry name" value="L-aspartase-like"/>
    <property type="match status" value="1"/>
</dbReference>
<dbReference type="PROSITE" id="PS00163">
    <property type="entry name" value="FUMARATE_LYASES"/>
    <property type="match status" value="1"/>
</dbReference>
<gene>
    <name evidence="1" type="primary">argH</name>
    <name type="ordered locus">BAMEG_4911</name>
</gene>
<reference key="1">
    <citation type="submission" date="2008-10" db="EMBL/GenBank/DDBJ databases">
        <title>Genome sequence of Bacillus anthracis str. CDC 684.</title>
        <authorList>
            <person name="Dodson R.J."/>
            <person name="Munk A.C."/>
            <person name="Brettin T."/>
            <person name="Bruce D."/>
            <person name="Detter C."/>
            <person name="Tapia R."/>
            <person name="Han C."/>
            <person name="Sutton G."/>
            <person name="Sims D."/>
        </authorList>
    </citation>
    <scope>NUCLEOTIDE SEQUENCE [LARGE SCALE GENOMIC DNA]</scope>
    <source>
        <strain>CDC 684 / NRRL 3495</strain>
    </source>
</reference>
<protein>
    <recommendedName>
        <fullName evidence="1">Argininosuccinate lyase</fullName>
        <shortName evidence="1">ASAL</shortName>
        <ecNumber evidence="1">4.3.2.1</ecNumber>
    </recommendedName>
    <alternativeName>
        <fullName evidence="1">Arginosuccinase</fullName>
    </alternativeName>
</protein>
<proteinExistence type="inferred from homology"/>
<organism>
    <name type="scientific">Bacillus anthracis (strain CDC 684 / NRRL 3495)</name>
    <dbReference type="NCBI Taxonomy" id="568206"/>
    <lineage>
        <taxon>Bacteria</taxon>
        <taxon>Bacillati</taxon>
        <taxon>Bacillota</taxon>
        <taxon>Bacilli</taxon>
        <taxon>Bacillales</taxon>
        <taxon>Bacillaceae</taxon>
        <taxon>Bacillus</taxon>
        <taxon>Bacillus cereus group</taxon>
    </lineage>
</organism>
<comment type="catalytic activity">
    <reaction evidence="1">
        <text>2-(N(omega)-L-arginino)succinate = fumarate + L-arginine</text>
        <dbReference type="Rhea" id="RHEA:24020"/>
        <dbReference type="ChEBI" id="CHEBI:29806"/>
        <dbReference type="ChEBI" id="CHEBI:32682"/>
        <dbReference type="ChEBI" id="CHEBI:57472"/>
        <dbReference type="EC" id="4.3.2.1"/>
    </reaction>
</comment>
<comment type="pathway">
    <text evidence="1">Amino-acid biosynthesis; L-arginine biosynthesis; L-arginine from L-ornithine and carbamoyl phosphate: step 3/3.</text>
</comment>
<comment type="subcellular location">
    <subcellularLocation>
        <location evidence="1">Cytoplasm</location>
    </subcellularLocation>
</comment>
<comment type="similarity">
    <text evidence="1">Belongs to the lyase 1 family. Argininosuccinate lyase subfamily.</text>
</comment>
<sequence>MSKLWGGRFTEEAEAWVEEFGASISFDQQLVNQDINGSIAHVTMLAKQGIVTKEEAEKIKIGLQYLLEEAKQNKLHFSVEAEDIHLNIEKMLMEKIGEVGGKLHTGRSRNDQVATDMHLYLKEKVEHIIKAIKQLQTVLVHQAENNIETIMPGYTHLQRAQPISFAHHILAYFWMLERDVNRYEDSLKRINISPLGAGALAGTTFPIDREYSAELLGFNGIYENSLDAVSDRDFILEFLSNSSMLMMHLSRFCEELILWSSQEFQFIEMSDQYATGSSIMPQKKNPDMAELIRGKTGRVYGNLFSLLTVMKGLPLAYNKDLQEDKEGMFDTVKTVEGCLHIMAGMLETMTVNKEKMGQAVTQDFSNATEIADYLANKGLPFRQAHEIVGKLVLHCTQKGIYLIDVPLATYKEMSALFEEDLYEVLSPYAAVKRRNSAGGTGFEQIEKALEKAKGLTKEAIKN</sequence>
<name>ARLY_BACAC</name>
<evidence type="ECO:0000255" key="1">
    <source>
        <dbReference type="HAMAP-Rule" id="MF_00006"/>
    </source>
</evidence>
<feature type="chain" id="PRO_1000116306" description="Argininosuccinate lyase">
    <location>
        <begin position="1"/>
        <end position="462"/>
    </location>
</feature>
<accession>C3L913</accession>